<protein>
    <recommendedName>
        <fullName evidence="1">dITP/XTP pyrophosphatase</fullName>
        <ecNumber evidence="1">3.6.1.66</ecNumber>
    </recommendedName>
    <alternativeName>
        <fullName evidence="1">Non-canonical purine NTP pyrophosphatase</fullName>
    </alternativeName>
    <alternativeName>
        <fullName evidence="1">Non-standard purine NTP pyrophosphatase</fullName>
    </alternativeName>
    <alternativeName>
        <fullName evidence="1">Nucleoside-triphosphate diphosphatase</fullName>
    </alternativeName>
    <alternativeName>
        <fullName evidence="1">Nucleoside-triphosphate pyrophosphatase</fullName>
        <shortName evidence="1">NTPase</shortName>
    </alternativeName>
</protein>
<gene>
    <name type="ordered locus">CV_0926</name>
</gene>
<proteinExistence type="inferred from homology"/>
<reference key="1">
    <citation type="journal article" date="2003" name="Proc. Natl. Acad. Sci. U.S.A.">
        <title>The complete genome sequence of Chromobacterium violaceum reveals remarkable and exploitable bacterial adaptability.</title>
        <authorList>
            <person name="Vasconcelos A.T.R."/>
            <person name="de Almeida D.F."/>
            <person name="Hungria M."/>
            <person name="Guimaraes C.T."/>
            <person name="Antonio R.V."/>
            <person name="Almeida F.C."/>
            <person name="de Almeida L.G.P."/>
            <person name="de Almeida R."/>
            <person name="Alves-Gomes J.A."/>
            <person name="Andrade E.M."/>
            <person name="Araripe J."/>
            <person name="de Araujo M.F.F."/>
            <person name="Astolfi-Filho S."/>
            <person name="Azevedo V."/>
            <person name="Baptista A.J."/>
            <person name="Bataus L.A.M."/>
            <person name="Batista J.S."/>
            <person name="Belo A."/>
            <person name="van den Berg C."/>
            <person name="Bogo M."/>
            <person name="Bonatto S."/>
            <person name="Bordignon J."/>
            <person name="Brigido M.M."/>
            <person name="Brito C.A."/>
            <person name="Brocchi M."/>
            <person name="Burity H.A."/>
            <person name="Camargo A.A."/>
            <person name="Cardoso D.D.P."/>
            <person name="Carneiro N.P."/>
            <person name="Carraro D.M."/>
            <person name="Carvalho C.M.B."/>
            <person name="Cascardo J.C.M."/>
            <person name="Cavada B.S."/>
            <person name="Chueire L.M.O."/>
            <person name="Creczynski-Pasa T.B."/>
            <person name="Cunha-Junior N.C."/>
            <person name="Fagundes N."/>
            <person name="Falcao C.L."/>
            <person name="Fantinatti F."/>
            <person name="Farias I.P."/>
            <person name="Felipe M.S.S."/>
            <person name="Ferrari L.P."/>
            <person name="Ferro J.A."/>
            <person name="Ferro M.I.T."/>
            <person name="Franco G.R."/>
            <person name="Freitas N.S.A."/>
            <person name="Furlan L.R."/>
            <person name="Gazzinelli R.T."/>
            <person name="Gomes E.A."/>
            <person name="Goncalves P.R."/>
            <person name="Grangeiro T.B."/>
            <person name="Grattapaglia D."/>
            <person name="Grisard E.C."/>
            <person name="Hanna E.S."/>
            <person name="Jardim S.N."/>
            <person name="Laurino J."/>
            <person name="Leoi L.C.T."/>
            <person name="Lima L.F.A."/>
            <person name="Loureiro M.F."/>
            <person name="Lyra M.C.C.P."/>
            <person name="Madeira H.M.F."/>
            <person name="Manfio G.P."/>
            <person name="Maranhao A.Q."/>
            <person name="Martins W.S."/>
            <person name="di Mauro S.M.Z."/>
            <person name="de Medeiros S.R.B."/>
            <person name="Meissner R.V."/>
            <person name="Moreira M.A.M."/>
            <person name="Nascimento F.F."/>
            <person name="Nicolas M.F."/>
            <person name="Oliveira J.G."/>
            <person name="Oliveira S.C."/>
            <person name="Paixao R.F.C."/>
            <person name="Parente J.A."/>
            <person name="Pedrosa F.O."/>
            <person name="Pena S.D.J."/>
            <person name="Pereira J.O."/>
            <person name="Pereira M."/>
            <person name="Pinto L.S.R.C."/>
            <person name="Pinto L.S."/>
            <person name="Porto J.I.R."/>
            <person name="Potrich D.P."/>
            <person name="Ramalho-Neto C.E."/>
            <person name="Reis A.M.M."/>
            <person name="Rigo L.U."/>
            <person name="Rondinelli E."/>
            <person name="Santos E.B.P."/>
            <person name="Santos F.R."/>
            <person name="Schneider M.P.C."/>
            <person name="Seuanez H.N."/>
            <person name="Silva A.M.R."/>
            <person name="da Silva A.L.C."/>
            <person name="Silva D.W."/>
            <person name="Silva R."/>
            <person name="Simoes I.C."/>
            <person name="Simon D."/>
            <person name="Soares C.M.A."/>
            <person name="Soares R.B.A."/>
            <person name="Souza E.M."/>
            <person name="Souza K.R.L."/>
            <person name="Souza R.C."/>
            <person name="Steffens M.B.R."/>
            <person name="Steindel M."/>
            <person name="Teixeira S.R."/>
            <person name="Urmenyi T."/>
            <person name="Vettore A."/>
            <person name="Wassem R."/>
            <person name="Zaha A."/>
            <person name="Simpson A.J.G."/>
        </authorList>
    </citation>
    <scope>NUCLEOTIDE SEQUENCE [LARGE SCALE GENOMIC DNA]</scope>
    <source>
        <strain>ATCC 12472 / DSM 30191 / JCM 1249 / CCUG 213 / NBRC 12614 / NCIMB 9131 / NCTC 9757 / MK</strain>
    </source>
</reference>
<organism>
    <name type="scientific">Chromobacterium violaceum (strain ATCC 12472 / DSM 30191 / JCM 1249 / CCUG 213 / NBRC 12614 / NCIMB 9131 / NCTC 9757 / MK)</name>
    <dbReference type="NCBI Taxonomy" id="243365"/>
    <lineage>
        <taxon>Bacteria</taxon>
        <taxon>Pseudomonadati</taxon>
        <taxon>Pseudomonadota</taxon>
        <taxon>Betaproteobacteria</taxon>
        <taxon>Neisseriales</taxon>
        <taxon>Chromobacteriaceae</taxon>
        <taxon>Chromobacterium</taxon>
    </lineage>
</organism>
<sequence>MFDQLVLASNNAGKLKEFGALFAELGVTVRPQRDFDVPECPEPHHTFLENALEKARHASRLTGLPALADDSGICVEALGGAPGVFSARFAGEPKSDARNNALLVEKLQGEANRRAWYYCVLVLVRHADDPQPLVADGIWLGEVRDEAAGEGGFGYDPHFHLPGYGVSVAELDAAEKNRVSHRGQALAALMAKLKALA</sequence>
<accession>Q7NZJ6</accession>
<evidence type="ECO:0000255" key="1">
    <source>
        <dbReference type="HAMAP-Rule" id="MF_01405"/>
    </source>
</evidence>
<name>IXTPA_CHRVO</name>
<comment type="function">
    <text evidence="1">Pyrophosphatase that catalyzes the hydrolysis of nucleoside triphosphates to their monophosphate derivatives, with a high preference for the non-canonical purine nucleotides XTP (xanthosine triphosphate), dITP (deoxyinosine triphosphate) and ITP. Seems to function as a house-cleaning enzyme that removes non-canonical purine nucleotides from the nucleotide pool, thus preventing their incorporation into DNA/RNA and avoiding chromosomal lesions.</text>
</comment>
<comment type="catalytic activity">
    <reaction evidence="1">
        <text>XTP + H2O = XMP + diphosphate + H(+)</text>
        <dbReference type="Rhea" id="RHEA:28610"/>
        <dbReference type="ChEBI" id="CHEBI:15377"/>
        <dbReference type="ChEBI" id="CHEBI:15378"/>
        <dbReference type="ChEBI" id="CHEBI:33019"/>
        <dbReference type="ChEBI" id="CHEBI:57464"/>
        <dbReference type="ChEBI" id="CHEBI:61314"/>
        <dbReference type="EC" id="3.6.1.66"/>
    </reaction>
</comment>
<comment type="catalytic activity">
    <reaction evidence="1">
        <text>dITP + H2O = dIMP + diphosphate + H(+)</text>
        <dbReference type="Rhea" id="RHEA:28342"/>
        <dbReference type="ChEBI" id="CHEBI:15377"/>
        <dbReference type="ChEBI" id="CHEBI:15378"/>
        <dbReference type="ChEBI" id="CHEBI:33019"/>
        <dbReference type="ChEBI" id="CHEBI:61194"/>
        <dbReference type="ChEBI" id="CHEBI:61382"/>
        <dbReference type="EC" id="3.6.1.66"/>
    </reaction>
</comment>
<comment type="catalytic activity">
    <reaction evidence="1">
        <text>ITP + H2O = IMP + diphosphate + H(+)</text>
        <dbReference type="Rhea" id="RHEA:29399"/>
        <dbReference type="ChEBI" id="CHEBI:15377"/>
        <dbReference type="ChEBI" id="CHEBI:15378"/>
        <dbReference type="ChEBI" id="CHEBI:33019"/>
        <dbReference type="ChEBI" id="CHEBI:58053"/>
        <dbReference type="ChEBI" id="CHEBI:61402"/>
        <dbReference type="EC" id="3.6.1.66"/>
    </reaction>
</comment>
<comment type="cofactor">
    <cofactor evidence="1">
        <name>Mg(2+)</name>
        <dbReference type="ChEBI" id="CHEBI:18420"/>
    </cofactor>
    <text evidence="1">Binds 1 Mg(2+) ion per subunit.</text>
</comment>
<comment type="subunit">
    <text evidence="1">Homodimer.</text>
</comment>
<comment type="similarity">
    <text evidence="1">Belongs to the HAM1 NTPase family.</text>
</comment>
<feature type="chain" id="PRO_0000178153" description="dITP/XTP pyrophosphatase">
    <location>
        <begin position="1"/>
        <end position="197"/>
    </location>
</feature>
<feature type="active site" description="Proton acceptor" evidence="1">
    <location>
        <position position="70"/>
    </location>
</feature>
<feature type="binding site" evidence="1">
    <location>
        <begin position="9"/>
        <end position="14"/>
    </location>
    <ligand>
        <name>substrate</name>
    </ligand>
</feature>
<feature type="binding site" evidence="1">
    <location>
        <position position="70"/>
    </location>
    <ligand>
        <name>Mg(2+)</name>
        <dbReference type="ChEBI" id="CHEBI:18420"/>
    </ligand>
</feature>
<feature type="binding site" evidence="1">
    <location>
        <position position="71"/>
    </location>
    <ligand>
        <name>substrate</name>
    </ligand>
</feature>
<feature type="binding site" evidence="1">
    <location>
        <begin position="153"/>
        <end position="156"/>
    </location>
    <ligand>
        <name>substrate</name>
    </ligand>
</feature>
<feature type="binding site" evidence="1">
    <location>
        <position position="176"/>
    </location>
    <ligand>
        <name>substrate</name>
    </ligand>
</feature>
<feature type="binding site" evidence="1">
    <location>
        <begin position="181"/>
        <end position="182"/>
    </location>
    <ligand>
        <name>substrate</name>
    </ligand>
</feature>
<keyword id="KW-0378">Hydrolase</keyword>
<keyword id="KW-0460">Magnesium</keyword>
<keyword id="KW-0479">Metal-binding</keyword>
<keyword id="KW-0546">Nucleotide metabolism</keyword>
<keyword id="KW-0547">Nucleotide-binding</keyword>
<keyword id="KW-1185">Reference proteome</keyword>
<dbReference type="EC" id="3.6.1.66" evidence="1"/>
<dbReference type="EMBL" id="AE016825">
    <property type="protein sequence ID" value="AAQ58600.1"/>
    <property type="molecule type" value="Genomic_DNA"/>
</dbReference>
<dbReference type="RefSeq" id="WP_011134481.1">
    <property type="nucleotide sequence ID" value="NC_005085.1"/>
</dbReference>
<dbReference type="SMR" id="Q7NZJ6"/>
<dbReference type="STRING" id="243365.CV_0926"/>
<dbReference type="GeneID" id="66366616"/>
<dbReference type="KEGG" id="cvi:CV_0926"/>
<dbReference type="eggNOG" id="COG0127">
    <property type="taxonomic scope" value="Bacteria"/>
</dbReference>
<dbReference type="HOGENOM" id="CLU_082080_0_3_4"/>
<dbReference type="OrthoDB" id="9807456at2"/>
<dbReference type="Proteomes" id="UP000001424">
    <property type="component" value="Chromosome"/>
</dbReference>
<dbReference type="GO" id="GO:0005829">
    <property type="term" value="C:cytosol"/>
    <property type="evidence" value="ECO:0007669"/>
    <property type="project" value="TreeGrafter"/>
</dbReference>
<dbReference type="GO" id="GO:0035870">
    <property type="term" value="F:dITP diphosphatase activity"/>
    <property type="evidence" value="ECO:0007669"/>
    <property type="project" value="RHEA"/>
</dbReference>
<dbReference type="GO" id="GO:0036220">
    <property type="term" value="F:ITP diphosphatase activity"/>
    <property type="evidence" value="ECO:0007669"/>
    <property type="project" value="UniProtKB-EC"/>
</dbReference>
<dbReference type="GO" id="GO:0046872">
    <property type="term" value="F:metal ion binding"/>
    <property type="evidence" value="ECO:0007669"/>
    <property type="project" value="UniProtKB-KW"/>
</dbReference>
<dbReference type="GO" id="GO:0000166">
    <property type="term" value="F:nucleotide binding"/>
    <property type="evidence" value="ECO:0007669"/>
    <property type="project" value="UniProtKB-KW"/>
</dbReference>
<dbReference type="GO" id="GO:0017111">
    <property type="term" value="F:ribonucleoside triphosphate phosphatase activity"/>
    <property type="evidence" value="ECO:0007669"/>
    <property type="project" value="InterPro"/>
</dbReference>
<dbReference type="GO" id="GO:0036222">
    <property type="term" value="F:XTP diphosphatase activity"/>
    <property type="evidence" value="ECO:0007669"/>
    <property type="project" value="RHEA"/>
</dbReference>
<dbReference type="GO" id="GO:0009117">
    <property type="term" value="P:nucleotide metabolic process"/>
    <property type="evidence" value="ECO:0007669"/>
    <property type="project" value="UniProtKB-KW"/>
</dbReference>
<dbReference type="GO" id="GO:0009146">
    <property type="term" value="P:purine nucleoside triphosphate catabolic process"/>
    <property type="evidence" value="ECO:0007669"/>
    <property type="project" value="UniProtKB-UniRule"/>
</dbReference>
<dbReference type="CDD" id="cd00515">
    <property type="entry name" value="HAM1"/>
    <property type="match status" value="1"/>
</dbReference>
<dbReference type="FunFam" id="3.90.950.10:FF:000001">
    <property type="entry name" value="dITP/XTP pyrophosphatase"/>
    <property type="match status" value="1"/>
</dbReference>
<dbReference type="Gene3D" id="3.90.950.10">
    <property type="match status" value="1"/>
</dbReference>
<dbReference type="HAMAP" id="MF_01405">
    <property type="entry name" value="Non_canon_purine_NTPase"/>
    <property type="match status" value="1"/>
</dbReference>
<dbReference type="InterPro" id="IPR020922">
    <property type="entry name" value="dITP/XTP_pyrophosphatase"/>
</dbReference>
<dbReference type="InterPro" id="IPR029001">
    <property type="entry name" value="ITPase-like_fam"/>
</dbReference>
<dbReference type="InterPro" id="IPR002637">
    <property type="entry name" value="RdgB/HAM1"/>
</dbReference>
<dbReference type="NCBIfam" id="TIGR00042">
    <property type="entry name" value="RdgB/HAM1 family non-canonical purine NTP pyrophosphatase"/>
    <property type="match status" value="1"/>
</dbReference>
<dbReference type="PANTHER" id="PTHR11067:SF9">
    <property type="entry name" value="INOSINE TRIPHOSPHATE PYROPHOSPHATASE"/>
    <property type="match status" value="1"/>
</dbReference>
<dbReference type="PANTHER" id="PTHR11067">
    <property type="entry name" value="INOSINE TRIPHOSPHATE PYROPHOSPHATASE/HAM1 PROTEIN"/>
    <property type="match status" value="1"/>
</dbReference>
<dbReference type="Pfam" id="PF01725">
    <property type="entry name" value="Ham1p_like"/>
    <property type="match status" value="1"/>
</dbReference>
<dbReference type="SUPFAM" id="SSF52972">
    <property type="entry name" value="ITPase-like"/>
    <property type="match status" value="1"/>
</dbReference>